<keyword id="KW-0067">ATP-binding</keyword>
<keyword id="KW-0963">Cytoplasm</keyword>
<keyword id="KW-0418">Kinase</keyword>
<keyword id="KW-0520">NAD</keyword>
<keyword id="KW-0521">NADP</keyword>
<keyword id="KW-0547">Nucleotide-binding</keyword>
<keyword id="KW-1185">Reference proteome</keyword>
<keyword id="KW-0808">Transferase</keyword>
<gene>
    <name evidence="1" type="primary">nadK</name>
    <name type="ordered locus">Dalk_4389</name>
</gene>
<organism>
    <name type="scientific">Desulfatibacillum aliphaticivorans</name>
    <dbReference type="NCBI Taxonomy" id="218208"/>
    <lineage>
        <taxon>Bacteria</taxon>
        <taxon>Pseudomonadati</taxon>
        <taxon>Thermodesulfobacteriota</taxon>
        <taxon>Desulfobacteria</taxon>
        <taxon>Desulfobacterales</taxon>
        <taxon>Desulfatibacillaceae</taxon>
        <taxon>Desulfatibacillum</taxon>
    </lineage>
</organism>
<feature type="chain" id="PRO_1000133567" description="NAD kinase">
    <location>
        <begin position="1"/>
        <end position="284"/>
    </location>
</feature>
<feature type="active site" description="Proton acceptor" evidence="1">
    <location>
        <position position="65"/>
    </location>
</feature>
<feature type="binding site" evidence="1">
    <location>
        <begin position="65"/>
        <end position="66"/>
    </location>
    <ligand>
        <name>NAD(+)</name>
        <dbReference type="ChEBI" id="CHEBI:57540"/>
    </ligand>
</feature>
<feature type="binding site" evidence="1">
    <location>
        <begin position="139"/>
        <end position="140"/>
    </location>
    <ligand>
        <name>NAD(+)</name>
        <dbReference type="ChEBI" id="CHEBI:57540"/>
    </ligand>
</feature>
<feature type="binding site" evidence="1">
    <location>
        <position position="150"/>
    </location>
    <ligand>
        <name>NAD(+)</name>
        <dbReference type="ChEBI" id="CHEBI:57540"/>
    </ligand>
</feature>
<feature type="binding site" evidence="1">
    <location>
        <position position="167"/>
    </location>
    <ligand>
        <name>NAD(+)</name>
        <dbReference type="ChEBI" id="CHEBI:57540"/>
    </ligand>
</feature>
<feature type="binding site" evidence="1">
    <location>
        <position position="169"/>
    </location>
    <ligand>
        <name>NAD(+)</name>
        <dbReference type="ChEBI" id="CHEBI:57540"/>
    </ligand>
</feature>
<feature type="binding site" evidence="1">
    <location>
        <position position="239"/>
    </location>
    <ligand>
        <name>NAD(+)</name>
        <dbReference type="ChEBI" id="CHEBI:57540"/>
    </ligand>
</feature>
<accession>B8FN99</accession>
<protein>
    <recommendedName>
        <fullName evidence="1">NAD kinase</fullName>
        <ecNumber evidence="1">2.7.1.23</ecNumber>
    </recommendedName>
    <alternativeName>
        <fullName evidence="1">ATP-dependent NAD kinase</fullName>
    </alternativeName>
</protein>
<dbReference type="EC" id="2.7.1.23" evidence="1"/>
<dbReference type="EMBL" id="CP001322">
    <property type="protein sequence ID" value="ACL06068.1"/>
    <property type="molecule type" value="Genomic_DNA"/>
</dbReference>
<dbReference type="RefSeq" id="WP_015949114.1">
    <property type="nucleotide sequence ID" value="NC_011768.1"/>
</dbReference>
<dbReference type="SMR" id="B8FN99"/>
<dbReference type="KEGG" id="dal:Dalk_4389"/>
<dbReference type="eggNOG" id="COG0061">
    <property type="taxonomic scope" value="Bacteria"/>
</dbReference>
<dbReference type="HOGENOM" id="CLU_008831_0_1_7"/>
<dbReference type="Proteomes" id="UP000000739">
    <property type="component" value="Chromosome"/>
</dbReference>
<dbReference type="GO" id="GO:0005737">
    <property type="term" value="C:cytoplasm"/>
    <property type="evidence" value="ECO:0007669"/>
    <property type="project" value="UniProtKB-SubCell"/>
</dbReference>
<dbReference type="GO" id="GO:0005524">
    <property type="term" value="F:ATP binding"/>
    <property type="evidence" value="ECO:0007669"/>
    <property type="project" value="UniProtKB-KW"/>
</dbReference>
<dbReference type="GO" id="GO:0046872">
    <property type="term" value="F:metal ion binding"/>
    <property type="evidence" value="ECO:0007669"/>
    <property type="project" value="UniProtKB-UniRule"/>
</dbReference>
<dbReference type="GO" id="GO:0051287">
    <property type="term" value="F:NAD binding"/>
    <property type="evidence" value="ECO:0007669"/>
    <property type="project" value="UniProtKB-ARBA"/>
</dbReference>
<dbReference type="GO" id="GO:0003951">
    <property type="term" value="F:NAD+ kinase activity"/>
    <property type="evidence" value="ECO:0007669"/>
    <property type="project" value="UniProtKB-UniRule"/>
</dbReference>
<dbReference type="GO" id="GO:0019674">
    <property type="term" value="P:NAD metabolic process"/>
    <property type="evidence" value="ECO:0007669"/>
    <property type="project" value="InterPro"/>
</dbReference>
<dbReference type="GO" id="GO:0006741">
    <property type="term" value="P:NADP biosynthetic process"/>
    <property type="evidence" value="ECO:0007669"/>
    <property type="project" value="UniProtKB-UniRule"/>
</dbReference>
<dbReference type="FunFam" id="2.60.200.30:FF:000009">
    <property type="entry name" value="Poly(P)/ATP NAD kinase"/>
    <property type="match status" value="1"/>
</dbReference>
<dbReference type="Gene3D" id="3.40.50.10330">
    <property type="entry name" value="Probable inorganic polyphosphate/atp-NAD kinase, domain 1"/>
    <property type="match status" value="1"/>
</dbReference>
<dbReference type="Gene3D" id="2.60.200.30">
    <property type="entry name" value="Probable inorganic polyphosphate/atp-NAD kinase, domain 2"/>
    <property type="match status" value="1"/>
</dbReference>
<dbReference type="HAMAP" id="MF_00361">
    <property type="entry name" value="NAD_kinase"/>
    <property type="match status" value="1"/>
</dbReference>
<dbReference type="InterPro" id="IPR017438">
    <property type="entry name" value="ATP-NAD_kinase_N"/>
</dbReference>
<dbReference type="InterPro" id="IPR017437">
    <property type="entry name" value="ATP-NAD_kinase_PpnK-typ_C"/>
</dbReference>
<dbReference type="InterPro" id="IPR016064">
    <property type="entry name" value="NAD/diacylglycerol_kinase_sf"/>
</dbReference>
<dbReference type="InterPro" id="IPR002504">
    <property type="entry name" value="NADK"/>
</dbReference>
<dbReference type="PANTHER" id="PTHR20275">
    <property type="entry name" value="NAD KINASE"/>
    <property type="match status" value="1"/>
</dbReference>
<dbReference type="PANTHER" id="PTHR20275:SF0">
    <property type="entry name" value="NAD KINASE"/>
    <property type="match status" value="1"/>
</dbReference>
<dbReference type="Pfam" id="PF01513">
    <property type="entry name" value="NAD_kinase"/>
    <property type="match status" value="1"/>
</dbReference>
<dbReference type="Pfam" id="PF20143">
    <property type="entry name" value="NAD_kinase_C"/>
    <property type="match status" value="1"/>
</dbReference>
<dbReference type="SUPFAM" id="SSF111331">
    <property type="entry name" value="NAD kinase/diacylglycerol kinase-like"/>
    <property type="match status" value="1"/>
</dbReference>
<proteinExistence type="inferred from homology"/>
<reference key="1">
    <citation type="journal article" date="2012" name="Environ. Microbiol.">
        <title>The genome sequence of Desulfatibacillum alkenivorans AK-01: a blueprint for anaerobic alkane oxidation.</title>
        <authorList>
            <person name="Callaghan A.V."/>
            <person name="Morris B.E."/>
            <person name="Pereira I.A."/>
            <person name="McInerney M.J."/>
            <person name="Austin R.N."/>
            <person name="Groves J.T."/>
            <person name="Kukor J.J."/>
            <person name="Suflita J.M."/>
            <person name="Young L.Y."/>
            <person name="Zylstra G.J."/>
            <person name="Wawrik B."/>
        </authorList>
    </citation>
    <scope>NUCLEOTIDE SEQUENCE [LARGE SCALE GENOMIC DNA]</scope>
    <source>
        <strain>AK-01</strain>
    </source>
</reference>
<evidence type="ECO:0000255" key="1">
    <source>
        <dbReference type="HAMAP-Rule" id="MF_00361"/>
    </source>
</evidence>
<comment type="function">
    <text evidence="1">Involved in the regulation of the intracellular balance of NAD and NADP, and is a key enzyme in the biosynthesis of NADP. Catalyzes specifically the phosphorylation on 2'-hydroxyl of the adenosine moiety of NAD to yield NADP.</text>
</comment>
<comment type="catalytic activity">
    <reaction evidence="1">
        <text>NAD(+) + ATP = ADP + NADP(+) + H(+)</text>
        <dbReference type="Rhea" id="RHEA:18629"/>
        <dbReference type="ChEBI" id="CHEBI:15378"/>
        <dbReference type="ChEBI" id="CHEBI:30616"/>
        <dbReference type="ChEBI" id="CHEBI:57540"/>
        <dbReference type="ChEBI" id="CHEBI:58349"/>
        <dbReference type="ChEBI" id="CHEBI:456216"/>
        <dbReference type="EC" id="2.7.1.23"/>
    </reaction>
</comment>
<comment type="cofactor">
    <cofactor evidence="1">
        <name>a divalent metal cation</name>
        <dbReference type="ChEBI" id="CHEBI:60240"/>
    </cofactor>
</comment>
<comment type="subcellular location">
    <subcellularLocation>
        <location evidence="1">Cytoplasm</location>
    </subcellularLocation>
</comment>
<comment type="similarity">
    <text evidence="1">Belongs to the NAD kinase family.</text>
</comment>
<name>NADK_DESAL</name>
<sequence length="284" mass="30929">MKKIGIFAKVHEEPLEMADQLQKWLVNRDIEVVRRESSPPVLDVTQSNPGHAPADLSCVIVLGGDGTFLSAARWIGNQEIPILGVKFGAVGFLSETRKQDLYPVLESVLKKDFTTQTRTRLLATVREDEKIITTQTVLNDVVINNGTLARLANVNTYVDEEYLTTFRADGLIVATPTGSTAYSLAAGGPILEPQVAAIVLTPICPFTLTNRPLIVTDTSTICMTLAATAMDVTLTFDGQAGLKLNEHHTITIQKAPVPTIMIKVPGQSYFDVLKTKLRWSGGKV</sequence>